<keyword id="KW-0066">ATP synthesis</keyword>
<keyword id="KW-0997">Cell inner membrane</keyword>
<keyword id="KW-1003">Cell membrane</keyword>
<keyword id="KW-0138">CF(0)</keyword>
<keyword id="KW-0375">Hydrogen ion transport</keyword>
<keyword id="KW-0406">Ion transport</keyword>
<keyword id="KW-0472">Membrane</keyword>
<keyword id="KW-1185">Reference proteome</keyword>
<keyword id="KW-0812">Transmembrane</keyword>
<keyword id="KW-1133">Transmembrane helix</keyword>
<keyword id="KW-0813">Transport</keyword>
<organism>
    <name type="scientific">Helicobacter pylori (strain ATCC 700392 / 26695)</name>
    <name type="common">Campylobacter pylori</name>
    <dbReference type="NCBI Taxonomy" id="85962"/>
    <lineage>
        <taxon>Bacteria</taxon>
        <taxon>Pseudomonadati</taxon>
        <taxon>Campylobacterota</taxon>
        <taxon>Epsilonproteobacteria</taxon>
        <taxon>Campylobacterales</taxon>
        <taxon>Helicobacteraceae</taxon>
        <taxon>Helicobacter</taxon>
    </lineage>
</organism>
<gene>
    <name evidence="1" type="primary">atpB</name>
    <name type="ordered locus">HP_0828</name>
</gene>
<comment type="function">
    <text evidence="1">Key component of the proton channel; it plays a direct role in the translocation of protons across the membrane.</text>
</comment>
<comment type="subunit">
    <text evidence="1">F-type ATPases have 2 components, CF(1) - the catalytic core - and CF(0) - the membrane proton channel. CF(1) has five subunits: alpha(3), beta(3), gamma(1), delta(1), epsilon(1). CF(0) has three main subunits: a(1), b(2) and c(9-12). The alpha and beta chains form an alternating ring which encloses part of the gamma chain. CF(1) is attached to CF(0) by a central stalk formed by the gamma and epsilon chains, while a peripheral stalk is formed by the delta and b chains.</text>
</comment>
<comment type="subcellular location">
    <subcellularLocation>
        <location evidence="1">Cell inner membrane</location>
        <topology evidence="1">Multi-pass membrane protein</topology>
    </subcellularLocation>
</comment>
<comment type="similarity">
    <text evidence="1">Belongs to the ATPase A chain family.</text>
</comment>
<reference key="1">
    <citation type="journal article" date="1997" name="Nature">
        <title>The complete genome sequence of the gastric pathogen Helicobacter pylori.</title>
        <authorList>
            <person name="Tomb J.-F."/>
            <person name="White O."/>
            <person name="Kerlavage A.R."/>
            <person name="Clayton R.A."/>
            <person name="Sutton G.G."/>
            <person name="Fleischmann R.D."/>
            <person name="Ketchum K.A."/>
            <person name="Klenk H.-P."/>
            <person name="Gill S.R."/>
            <person name="Dougherty B.A."/>
            <person name="Nelson K.E."/>
            <person name="Quackenbush J."/>
            <person name="Zhou L."/>
            <person name="Kirkness E.F."/>
            <person name="Peterson S.N."/>
            <person name="Loftus B.J."/>
            <person name="Richardson D.L."/>
            <person name="Dodson R.J."/>
            <person name="Khalak H.G."/>
            <person name="Glodek A."/>
            <person name="McKenney K."/>
            <person name="FitzGerald L.M."/>
            <person name="Lee N."/>
            <person name="Adams M.D."/>
            <person name="Hickey E.K."/>
            <person name="Berg D.E."/>
            <person name="Gocayne J.D."/>
            <person name="Utterback T.R."/>
            <person name="Peterson J.D."/>
            <person name="Kelley J.M."/>
            <person name="Cotton M.D."/>
            <person name="Weidman J.F."/>
            <person name="Fujii C."/>
            <person name="Bowman C."/>
            <person name="Watthey L."/>
            <person name="Wallin E."/>
            <person name="Hayes W.S."/>
            <person name="Borodovsky M."/>
            <person name="Karp P.D."/>
            <person name="Smith H.O."/>
            <person name="Fraser C.M."/>
            <person name="Venter J.C."/>
        </authorList>
    </citation>
    <scope>NUCLEOTIDE SEQUENCE [LARGE SCALE GENOMIC DNA]</scope>
    <source>
        <strain>ATCC 700392 / 26695</strain>
    </source>
</reference>
<feature type="chain" id="PRO_0000082057" description="ATP synthase subunit a">
    <location>
        <begin position="1"/>
        <end position="226"/>
    </location>
</feature>
<feature type="transmembrane region" description="Helical" evidence="1">
    <location>
        <begin position="18"/>
        <end position="38"/>
    </location>
</feature>
<feature type="transmembrane region" description="Helical" evidence="1">
    <location>
        <begin position="79"/>
        <end position="99"/>
    </location>
</feature>
<feature type="transmembrane region" description="Helical" evidence="1">
    <location>
        <begin position="105"/>
        <end position="125"/>
    </location>
</feature>
<feature type="transmembrane region" description="Helical" evidence="1">
    <location>
        <begin position="134"/>
        <end position="154"/>
    </location>
</feature>
<feature type="transmembrane region" description="Helical" evidence="1">
    <location>
        <begin position="179"/>
        <end position="199"/>
    </location>
</feature>
<feature type="transmembrane region" description="Helical" evidence="1">
    <location>
        <begin position="201"/>
        <end position="221"/>
    </location>
</feature>
<name>ATP6_HELPY</name>
<dbReference type="EMBL" id="AE000511">
    <property type="protein sequence ID" value="AAD07878.1"/>
    <property type="molecule type" value="Genomic_DNA"/>
</dbReference>
<dbReference type="PIR" id="D64623">
    <property type="entry name" value="D64623"/>
</dbReference>
<dbReference type="RefSeq" id="NP_207621.1">
    <property type="nucleotide sequence ID" value="NC_000915.1"/>
</dbReference>
<dbReference type="RefSeq" id="WP_000401225.1">
    <property type="nucleotide sequence ID" value="NC_018939.1"/>
</dbReference>
<dbReference type="SMR" id="P56085"/>
<dbReference type="FunCoup" id="P56085">
    <property type="interactions" value="239"/>
</dbReference>
<dbReference type="STRING" id="85962.HP_0828"/>
<dbReference type="PaxDb" id="85962-C694_04245"/>
<dbReference type="EnsemblBacteria" id="AAD07878">
    <property type="protein sequence ID" value="AAD07878"/>
    <property type="gene ID" value="HP_0828"/>
</dbReference>
<dbReference type="KEGG" id="heo:C694_04245"/>
<dbReference type="KEGG" id="hpy:HP_0828"/>
<dbReference type="PATRIC" id="fig|85962.47.peg.883"/>
<dbReference type="eggNOG" id="COG0356">
    <property type="taxonomic scope" value="Bacteria"/>
</dbReference>
<dbReference type="InParanoid" id="P56085"/>
<dbReference type="OrthoDB" id="9789241at2"/>
<dbReference type="PhylomeDB" id="P56085"/>
<dbReference type="Proteomes" id="UP000000429">
    <property type="component" value="Chromosome"/>
</dbReference>
<dbReference type="GO" id="GO:0005886">
    <property type="term" value="C:plasma membrane"/>
    <property type="evidence" value="ECO:0000318"/>
    <property type="project" value="GO_Central"/>
</dbReference>
<dbReference type="GO" id="GO:0045259">
    <property type="term" value="C:proton-transporting ATP synthase complex"/>
    <property type="evidence" value="ECO:0007669"/>
    <property type="project" value="UniProtKB-KW"/>
</dbReference>
<dbReference type="GO" id="GO:0046933">
    <property type="term" value="F:proton-transporting ATP synthase activity, rotational mechanism"/>
    <property type="evidence" value="ECO:0000318"/>
    <property type="project" value="GO_Central"/>
</dbReference>
<dbReference type="GO" id="GO:0042777">
    <property type="term" value="P:proton motive force-driven plasma membrane ATP synthesis"/>
    <property type="evidence" value="ECO:0000318"/>
    <property type="project" value="GO_Central"/>
</dbReference>
<dbReference type="CDD" id="cd00310">
    <property type="entry name" value="ATP-synt_Fo_a_6"/>
    <property type="match status" value="1"/>
</dbReference>
<dbReference type="FunFam" id="1.20.120.220:FF:000006">
    <property type="entry name" value="ATP synthase subunit a"/>
    <property type="match status" value="1"/>
</dbReference>
<dbReference type="Gene3D" id="1.20.120.220">
    <property type="entry name" value="ATP synthase, F0 complex, subunit A"/>
    <property type="match status" value="1"/>
</dbReference>
<dbReference type="HAMAP" id="MF_01393">
    <property type="entry name" value="ATP_synth_a_bact"/>
    <property type="match status" value="1"/>
</dbReference>
<dbReference type="InterPro" id="IPR045082">
    <property type="entry name" value="ATP_syn_F0_a_bact/chloroplast"/>
</dbReference>
<dbReference type="InterPro" id="IPR000568">
    <property type="entry name" value="ATP_synth_F0_asu"/>
</dbReference>
<dbReference type="InterPro" id="IPR023011">
    <property type="entry name" value="ATP_synth_F0_asu_AS"/>
</dbReference>
<dbReference type="InterPro" id="IPR035908">
    <property type="entry name" value="F0_ATP_A_sf"/>
</dbReference>
<dbReference type="NCBIfam" id="TIGR01131">
    <property type="entry name" value="ATP_synt_6_or_A"/>
    <property type="match status" value="1"/>
</dbReference>
<dbReference type="NCBIfam" id="NF004481">
    <property type="entry name" value="PRK05815.2-3"/>
    <property type="match status" value="1"/>
</dbReference>
<dbReference type="PANTHER" id="PTHR42823">
    <property type="entry name" value="ATP SYNTHASE SUBUNIT A, CHLOROPLASTIC"/>
    <property type="match status" value="1"/>
</dbReference>
<dbReference type="PANTHER" id="PTHR42823:SF3">
    <property type="entry name" value="ATP SYNTHASE SUBUNIT A, CHLOROPLASTIC"/>
    <property type="match status" value="1"/>
</dbReference>
<dbReference type="Pfam" id="PF00119">
    <property type="entry name" value="ATP-synt_A"/>
    <property type="match status" value="1"/>
</dbReference>
<dbReference type="PRINTS" id="PR00123">
    <property type="entry name" value="ATPASEA"/>
</dbReference>
<dbReference type="SUPFAM" id="SSF81336">
    <property type="entry name" value="F1F0 ATP synthase subunit A"/>
    <property type="match status" value="1"/>
</dbReference>
<dbReference type="PROSITE" id="PS00449">
    <property type="entry name" value="ATPASE_A"/>
    <property type="match status" value="1"/>
</dbReference>
<proteinExistence type="inferred from homology"/>
<sequence length="226" mass="25615">MEHRVFTIANFFSSNHDFITGFFVVLTAVLMFLISLGASRKMQMVPMGLQNVYESIISAILSVAKDIIGEELARKYFPLAGTIALYVFFSNMIGIIPGFESPTASWSFTLVLALIVFFYYHFEGIRVQGFFKYFAHFAGPVKWLAPFMFPIEIISHFSRIVSLSFRLFGNIKGDDMFLLIMLLLVPWAVPVAPFMVLFFMGILQAFVFMILTYVYLAGAVLTDEGH</sequence>
<evidence type="ECO:0000255" key="1">
    <source>
        <dbReference type="HAMAP-Rule" id="MF_01393"/>
    </source>
</evidence>
<accession>P56085</accession>
<protein>
    <recommendedName>
        <fullName evidence="1">ATP synthase subunit a</fullName>
    </recommendedName>
    <alternativeName>
        <fullName evidence="1">ATP synthase F0 sector subunit a</fullName>
    </alternativeName>
    <alternativeName>
        <fullName evidence="1">F-ATPase subunit 6</fullName>
    </alternativeName>
</protein>